<dbReference type="EC" id="3.6.-.-"/>
<dbReference type="EMBL" id="AF088800">
    <property type="protein sequence ID" value="AAC68691.1"/>
    <property type="molecule type" value="Genomic_DNA"/>
</dbReference>
<dbReference type="RefSeq" id="WP_020969670.1">
    <property type="nucleotide sequence ID" value="NZ_CP011295.1"/>
</dbReference>
<dbReference type="SMR" id="Q9ZG11"/>
<dbReference type="STRING" id="1833.XU06_14815"/>
<dbReference type="GeneID" id="57486885"/>
<dbReference type="GO" id="GO:0016817">
    <property type="term" value="F:hydrolase activity, acting on acid anhydrides"/>
    <property type="evidence" value="ECO:0007669"/>
    <property type="project" value="InterPro"/>
</dbReference>
<dbReference type="GO" id="GO:0046872">
    <property type="term" value="F:metal ion binding"/>
    <property type="evidence" value="ECO:0007669"/>
    <property type="project" value="UniProtKB-KW"/>
</dbReference>
<dbReference type="Gene3D" id="3.90.79.10">
    <property type="entry name" value="Nucleoside Triphosphate Pyrophosphohydrolase"/>
    <property type="match status" value="1"/>
</dbReference>
<dbReference type="InterPro" id="IPR015797">
    <property type="entry name" value="NUDIX_hydrolase-like_dom_sf"/>
</dbReference>
<dbReference type="InterPro" id="IPR020084">
    <property type="entry name" value="NUDIX_hydrolase_CS"/>
</dbReference>
<dbReference type="InterPro" id="IPR000086">
    <property type="entry name" value="NUDIX_hydrolase_dom"/>
</dbReference>
<dbReference type="InterPro" id="IPR024195">
    <property type="entry name" value="NUDIX_hydrolase_YfcD_pred"/>
</dbReference>
<dbReference type="Pfam" id="PF00293">
    <property type="entry name" value="NUDIX"/>
    <property type="match status" value="1"/>
</dbReference>
<dbReference type="PIRSF" id="PIRSF017340">
    <property type="entry name" value="Nudix_hydro"/>
    <property type="match status" value="1"/>
</dbReference>
<dbReference type="SUPFAM" id="SSF55811">
    <property type="entry name" value="Nudix"/>
    <property type="match status" value="1"/>
</dbReference>
<dbReference type="PROSITE" id="PS51462">
    <property type="entry name" value="NUDIX"/>
    <property type="match status" value="1"/>
</dbReference>
<dbReference type="PROSITE" id="PS00893">
    <property type="entry name" value="NUDIX_BOX"/>
    <property type="match status" value="1"/>
</dbReference>
<reference key="1">
    <citation type="journal article" date="1998" name="J. Bacteriol.">
        <title>The 20S proteasome of Streptomyces coelicolor.</title>
        <authorList>
            <person name="Nagy I."/>
            <person name="Tamura T."/>
            <person name="Vanderleyden J."/>
            <person name="Baumeister W."/>
            <person name="De Mot R."/>
        </authorList>
    </citation>
    <scope>NUCLEOTIDE SEQUENCE [GENOMIC DNA]</scope>
    <source>
        <strain>NI86/21</strain>
    </source>
</reference>
<keyword id="KW-0378">Hydrolase</keyword>
<keyword id="KW-0460">Magnesium</keyword>
<keyword id="KW-0479">Metal-binding</keyword>
<evidence type="ECO:0000250" key="1"/>
<evidence type="ECO:0000255" key="2">
    <source>
        <dbReference type="PROSITE-ProRule" id="PRU00794"/>
    </source>
</evidence>
<evidence type="ECO:0000305" key="3"/>
<proteinExistence type="inferred from homology"/>
<name>YO19_RHOER</name>
<feature type="chain" id="PRO_0000057086" description="Uncharacterized Nudix hydrolase orf19">
    <location>
        <begin position="1"/>
        <end position="185"/>
    </location>
</feature>
<feature type="domain" description="Nudix hydrolase" evidence="2">
    <location>
        <begin position="39"/>
        <end position="177"/>
    </location>
</feature>
<feature type="short sequence motif" description="Nudix box">
    <location>
        <begin position="77"/>
        <end position="99"/>
    </location>
</feature>
<feature type="binding site" evidence="1">
    <location>
        <position position="93"/>
    </location>
    <ligand>
        <name>Mg(2+)</name>
        <dbReference type="ChEBI" id="CHEBI:18420"/>
    </ligand>
</feature>
<feature type="binding site" evidence="1">
    <location>
        <position position="97"/>
    </location>
    <ligand>
        <name>Mg(2+)</name>
        <dbReference type="ChEBI" id="CHEBI:18420"/>
    </ligand>
</feature>
<accession>Q9ZG11</accession>
<comment type="cofactor">
    <cofactor evidence="1">
        <name>Mg(2+)</name>
        <dbReference type="ChEBI" id="CHEBI:18420"/>
    </cofactor>
</comment>
<comment type="similarity">
    <text evidence="3">Belongs to the Nudix hydrolase family.</text>
</comment>
<sequence>MHQPLTADLNPADEVVAVYDRTGNPIGRAPRSVVYSGGLWHASAGVLVRTGDGSRIYVHRRTDTKAVFGGYHDCLAGGVVDPGETPQETAIREVGEELGIFGTADQPLQLTEIARISWDGEWNNSPLRCHLFAFELRYDGPMAHQPSEIAEGWWWTPKELGAHLQDPSWPFVPDSRALLADYCWS</sequence>
<protein>
    <recommendedName>
        <fullName>Uncharacterized Nudix hydrolase orf19</fullName>
        <ecNumber>3.6.-.-</ecNumber>
    </recommendedName>
</protein>
<organism>
    <name type="scientific">Rhodococcus erythropolis</name>
    <name type="common">Arthrobacter picolinophilus</name>
    <dbReference type="NCBI Taxonomy" id="1833"/>
    <lineage>
        <taxon>Bacteria</taxon>
        <taxon>Bacillati</taxon>
        <taxon>Actinomycetota</taxon>
        <taxon>Actinomycetes</taxon>
        <taxon>Mycobacteriales</taxon>
        <taxon>Nocardiaceae</taxon>
        <taxon>Rhodococcus</taxon>
        <taxon>Rhodococcus erythropolis group</taxon>
    </lineage>
</organism>